<reference key="1">
    <citation type="submission" date="2005-07" db="EMBL/GenBank/DDBJ databases">
        <title>Complete sequence of Synechococcus sp. CC9605.</title>
        <authorList>
            <consortium name="US DOE Joint Genome Institute"/>
            <person name="Copeland A."/>
            <person name="Lucas S."/>
            <person name="Lapidus A."/>
            <person name="Barry K."/>
            <person name="Detter J.C."/>
            <person name="Glavina T."/>
            <person name="Hammon N."/>
            <person name="Israni S."/>
            <person name="Pitluck S."/>
            <person name="Schmutz J."/>
            <person name="Martinez M."/>
            <person name="Larimer F."/>
            <person name="Land M."/>
            <person name="Kyrpides N."/>
            <person name="Ivanova N."/>
            <person name="Richardson P."/>
        </authorList>
    </citation>
    <scope>NUCLEOTIDE SEQUENCE [LARGE SCALE GENOMIC DNA]</scope>
    <source>
        <strain>CC9605</strain>
    </source>
</reference>
<accession>Q3AJZ1</accession>
<dbReference type="EMBL" id="CP000110">
    <property type="protein sequence ID" value="ABB35091.1"/>
    <property type="molecule type" value="Genomic_DNA"/>
</dbReference>
<dbReference type="RefSeq" id="WP_006041316.1">
    <property type="nucleotide sequence ID" value="NC_007516.1"/>
</dbReference>
<dbReference type="SMR" id="Q3AJZ1"/>
<dbReference type="STRING" id="110662.Syncc9605_1337"/>
<dbReference type="KEGG" id="syd:Syncc9605_1337"/>
<dbReference type="eggNOG" id="COG0238">
    <property type="taxonomic scope" value="Bacteria"/>
</dbReference>
<dbReference type="HOGENOM" id="CLU_148710_2_3_3"/>
<dbReference type="OrthoDB" id="9812008at2"/>
<dbReference type="GO" id="GO:0022627">
    <property type="term" value="C:cytosolic small ribosomal subunit"/>
    <property type="evidence" value="ECO:0007669"/>
    <property type="project" value="TreeGrafter"/>
</dbReference>
<dbReference type="GO" id="GO:0070181">
    <property type="term" value="F:small ribosomal subunit rRNA binding"/>
    <property type="evidence" value="ECO:0007669"/>
    <property type="project" value="TreeGrafter"/>
</dbReference>
<dbReference type="GO" id="GO:0003735">
    <property type="term" value="F:structural constituent of ribosome"/>
    <property type="evidence" value="ECO:0007669"/>
    <property type="project" value="InterPro"/>
</dbReference>
<dbReference type="GO" id="GO:0006412">
    <property type="term" value="P:translation"/>
    <property type="evidence" value="ECO:0007669"/>
    <property type="project" value="UniProtKB-UniRule"/>
</dbReference>
<dbReference type="FunFam" id="4.10.640.10:FF:000002">
    <property type="entry name" value="30S ribosomal protein S18, chloroplastic"/>
    <property type="match status" value="1"/>
</dbReference>
<dbReference type="Gene3D" id="4.10.640.10">
    <property type="entry name" value="Ribosomal protein S18"/>
    <property type="match status" value="1"/>
</dbReference>
<dbReference type="HAMAP" id="MF_00270">
    <property type="entry name" value="Ribosomal_bS18"/>
    <property type="match status" value="1"/>
</dbReference>
<dbReference type="InterPro" id="IPR001648">
    <property type="entry name" value="Ribosomal_bS18"/>
</dbReference>
<dbReference type="InterPro" id="IPR018275">
    <property type="entry name" value="Ribosomal_bS18_CS"/>
</dbReference>
<dbReference type="InterPro" id="IPR036870">
    <property type="entry name" value="Ribosomal_bS18_sf"/>
</dbReference>
<dbReference type="NCBIfam" id="TIGR00165">
    <property type="entry name" value="S18"/>
    <property type="match status" value="1"/>
</dbReference>
<dbReference type="PANTHER" id="PTHR13479">
    <property type="entry name" value="30S RIBOSOMAL PROTEIN S18"/>
    <property type="match status" value="1"/>
</dbReference>
<dbReference type="PANTHER" id="PTHR13479:SF40">
    <property type="entry name" value="SMALL RIBOSOMAL SUBUNIT PROTEIN BS18M"/>
    <property type="match status" value="1"/>
</dbReference>
<dbReference type="Pfam" id="PF01084">
    <property type="entry name" value="Ribosomal_S18"/>
    <property type="match status" value="1"/>
</dbReference>
<dbReference type="PRINTS" id="PR00974">
    <property type="entry name" value="RIBOSOMALS18"/>
</dbReference>
<dbReference type="SUPFAM" id="SSF46911">
    <property type="entry name" value="Ribosomal protein S18"/>
    <property type="match status" value="1"/>
</dbReference>
<dbReference type="PROSITE" id="PS00057">
    <property type="entry name" value="RIBOSOMAL_S18"/>
    <property type="match status" value="1"/>
</dbReference>
<gene>
    <name evidence="1" type="primary">rpsR</name>
    <name evidence="1" type="synonym">rps18</name>
    <name type="ordered locus">Syncc9605_1337</name>
</gene>
<feature type="chain" id="PRO_1000003647" description="Small ribosomal subunit protein bS18">
    <location>
        <begin position="1"/>
        <end position="73"/>
    </location>
</feature>
<organism>
    <name type="scientific">Synechococcus sp. (strain CC9605)</name>
    <dbReference type="NCBI Taxonomy" id="110662"/>
    <lineage>
        <taxon>Bacteria</taxon>
        <taxon>Bacillati</taxon>
        <taxon>Cyanobacteriota</taxon>
        <taxon>Cyanophyceae</taxon>
        <taxon>Synechococcales</taxon>
        <taxon>Synechococcaceae</taxon>
        <taxon>Synechococcus</taxon>
    </lineage>
</organism>
<protein>
    <recommendedName>
        <fullName evidence="1">Small ribosomal subunit protein bS18</fullName>
    </recommendedName>
    <alternativeName>
        <fullName evidence="2">30S ribosomal protein S18</fullName>
    </alternativeName>
</protein>
<name>RS18_SYNSC</name>
<comment type="function">
    <text evidence="1">Binds as a heterodimer with protein bS6 to the central domain of the 16S rRNA, where it helps stabilize the platform of the 30S subunit.</text>
</comment>
<comment type="subunit">
    <text evidence="1">Part of the 30S ribosomal subunit. Forms a tight heterodimer with protein bS6.</text>
</comment>
<comment type="similarity">
    <text evidence="1">Belongs to the bacterial ribosomal protein bS18 family.</text>
</comment>
<keyword id="KW-0687">Ribonucleoprotein</keyword>
<keyword id="KW-0689">Ribosomal protein</keyword>
<keyword id="KW-0694">RNA-binding</keyword>
<keyword id="KW-0699">rRNA-binding</keyword>
<evidence type="ECO:0000255" key="1">
    <source>
        <dbReference type="HAMAP-Rule" id="MF_00270"/>
    </source>
</evidence>
<evidence type="ECO:0000305" key="2"/>
<sequence length="73" mass="8295">MSSSFFKKRLSPIKPGDPIDYKDVDLLKKFITERGKILPRRLTGLTAKQQRDLTNAVKRARIVALLPFVNPEG</sequence>
<proteinExistence type="inferred from homology"/>